<gene>
    <name type="primary">flgJ</name>
    <name type="ordered locus">BUsg_333</name>
</gene>
<dbReference type="EMBL" id="AE013218">
    <property type="protein sequence ID" value="AAM67887.1"/>
    <property type="molecule type" value="Genomic_DNA"/>
</dbReference>
<dbReference type="RefSeq" id="WP_011053854.1">
    <property type="nucleotide sequence ID" value="NC_004061.1"/>
</dbReference>
<dbReference type="STRING" id="198804.BUsg_333"/>
<dbReference type="GeneID" id="93003804"/>
<dbReference type="KEGG" id="bas:BUsg_333"/>
<dbReference type="eggNOG" id="COG3951">
    <property type="taxonomic scope" value="Bacteria"/>
</dbReference>
<dbReference type="HOGENOM" id="CLU_130187_1_0_6"/>
<dbReference type="Proteomes" id="UP000000416">
    <property type="component" value="Chromosome"/>
</dbReference>
<dbReference type="GO" id="GO:0044781">
    <property type="term" value="P:bacterial-type flagellum organization"/>
    <property type="evidence" value="ECO:0007669"/>
    <property type="project" value="UniProtKB-KW"/>
</dbReference>
<dbReference type="InterPro" id="IPR019301">
    <property type="entry name" value="Flagellar_prot_FlgJ_N"/>
</dbReference>
<dbReference type="Pfam" id="PF10135">
    <property type="entry name" value="Rod-binding"/>
    <property type="match status" value="1"/>
</dbReference>
<dbReference type="PRINTS" id="PR01002">
    <property type="entry name" value="FLGFLGJ"/>
</dbReference>
<name>FLGJ_BUCAP</name>
<sequence>MKNDLSLFNIINYRTKFINDLKYQVKNNPKKYQLETAKEVESLFIQMLLKSMRNSLTQDNLLDSNQSRFYTEIYDQKISKEIAKRGIGLTHIILQQIQKINNNFYL</sequence>
<protein>
    <recommendedName>
        <fullName>Putative flagellar protein FlgJ homolog</fullName>
    </recommendedName>
</protein>
<feature type="chain" id="PRO_0000165712" description="Putative flagellar protein FlgJ homolog">
    <location>
        <begin position="1"/>
        <end position="106"/>
    </location>
</feature>
<evidence type="ECO:0000305" key="1"/>
<reference key="1">
    <citation type="journal article" date="2002" name="Science">
        <title>50 million years of genomic stasis in endosymbiotic bacteria.</title>
        <authorList>
            <person name="Tamas I."/>
            <person name="Klasson L."/>
            <person name="Canbaeck B."/>
            <person name="Naeslund A.K."/>
            <person name="Eriksson A.-S."/>
            <person name="Wernegreen J.J."/>
            <person name="Sandstroem J.P."/>
            <person name="Moran N.A."/>
            <person name="Andersson S.G.E."/>
        </authorList>
    </citation>
    <scope>NUCLEOTIDE SEQUENCE [LARGE SCALE GENOMIC DNA]</scope>
    <source>
        <strain>Sg</strain>
    </source>
</reference>
<comment type="miscellaneous">
    <text>This protein is shorter than other FlgJ proteins and lacks the muramidase domain. It may be degenerating and may no longer be functional.</text>
</comment>
<comment type="similarity">
    <text evidence="1">Belongs to the FlgJ family.</text>
</comment>
<proteinExistence type="inferred from homology"/>
<accession>Q8K9K1</accession>
<organism>
    <name type="scientific">Buchnera aphidicola subsp. Schizaphis graminum (strain Sg)</name>
    <dbReference type="NCBI Taxonomy" id="198804"/>
    <lineage>
        <taxon>Bacteria</taxon>
        <taxon>Pseudomonadati</taxon>
        <taxon>Pseudomonadota</taxon>
        <taxon>Gammaproteobacteria</taxon>
        <taxon>Enterobacterales</taxon>
        <taxon>Erwiniaceae</taxon>
        <taxon>Buchnera</taxon>
    </lineage>
</organism>
<keyword id="KW-1005">Bacterial flagellum biogenesis</keyword>